<protein>
    <recommendedName>
        <fullName>Small integral membrane protein 9</fullName>
    </recommendedName>
</protein>
<sequence>MKPLKLFCIGLLLCPLVCLLLETAPPPSALLTLEVKEKTGLKSDAMGVFAIRKNTSDINRQVSGLQRPWMTKFKNHLSDFFKSSIPPAAIFALFVTTAIMRAAIVNKRLEEPHRQWTIDQRSSLEMQNMNLIKLFGG</sequence>
<organism>
    <name type="scientific">Mus musculus</name>
    <name type="common">Mouse</name>
    <dbReference type="NCBI Taxonomy" id="10090"/>
    <lineage>
        <taxon>Eukaryota</taxon>
        <taxon>Metazoa</taxon>
        <taxon>Chordata</taxon>
        <taxon>Craniata</taxon>
        <taxon>Vertebrata</taxon>
        <taxon>Euteleostomi</taxon>
        <taxon>Mammalia</taxon>
        <taxon>Eutheria</taxon>
        <taxon>Euarchontoglires</taxon>
        <taxon>Glires</taxon>
        <taxon>Rodentia</taxon>
        <taxon>Myomorpha</taxon>
        <taxon>Muroidea</taxon>
        <taxon>Muridae</taxon>
        <taxon>Murinae</taxon>
        <taxon>Mus</taxon>
        <taxon>Mus</taxon>
    </lineage>
</organism>
<feature type="signal peptide" evidence="1">
    <location>
        <begin position="1"/>
        <end position="23"/>
    </location>
</feature>
<feature type="chain" id="PRO_0000348248" description="Small integral membrane protein 9">
    <location>
        <begin position="24"/>
        <end position="137"/>
    </location>
</feature>
<feature type="topological domain" description="Extracellular" evidence="1">
    <location>
        <begin position="24"/>
        <end position="84"/>
    </location>
</feature>
<feature type="transmembrane region" description="Helical" evidence="1">
    <location>
        <begin position="85"/>
        <end position="105"/>
    </location>
</feature>
<feature type="topological domain" description="Cytoplasmic" evidence="1">
    <location>
        <begin position="106"/>
        <end position="137"/>
    </location>
</feature>
<gene>
    <name type="primary">Smim9</name>
</gene>
<name>SMIM9_MOUSE</name>
<reference key="1">
    <citation type="journal article" date="2005" name="Science">
        <title>The transcriptional landscape of the mammalian genome.</title>
        <authorList>
            <person name="Carninci P."/>
            <person name="Kasukawa T."/>
            <person name="Katayama S."/>
            <person name="Gough J."/>
            <person name="Frith M.C."/>
            <person name="Maeda N."/>
            <person name="Oyama R."/>
            <person name="Ravasi T."/>
            <person name="Lenhard B."/>
            <person name="Wells C."/>
            <person name="Kodzius R."/>
            <person name="Shimokawa K."/>
            <person name="Bajic V.B."/>
            <person name="Brenner S.E."/>
            <person name="Batalov S."/>
            <person name="Forrest A.R."/>
            <person name="Zavolan M."/>
            <person name="Davis M.J."/>
            <person name="Wilming L.G."/>
            <person name="Aidinis V."/>
            <person name="Allen J.E."/>
            <person name="Ambesi-Impiombato A."/>
            <person name="Apweiler R."/>
            <person name="Aturaliya R.N."/>
            <person name="Bailey T.L."/>
            <person name="Bansal M."/>
            <person name="Baxter L."/>
            <person name="Beisel K.W."/>
            <person name="Bersano T."/>
            <person name="Bono H."/>
            <person name="Chalk A.M."/>
            <person name="Chiu K.P."/>
            <person name="Choudhary V."/>
            <person name="Christoffels A."/>
            <person name="Clutterbuck D.R."/>
            <person name="Crowe M.L."/>
            <person name="Dalla E."/>
            <person name="Dalrymple B.P."/>
            <person name="de Bono B."/>
            <person name="Della Gatta G."/>
            <person name="di Bernardo D."/>
            <person name="Down T."/>
            <person name="Engstrom P."/>
            <person name="Fagiolini M."/>
            <person name="Faulkner G."/>
            <person name="Fletcher C.F."/>
            <person name="Fukushima T."/>
            <person name="Furuno M."/>
            <person name="Futaki S."/>
            <person name="Gariboldi M."/>
            <person name="Georgii-Hemming P."/>
            <person name="Gingeras T.R."/>
            <person name="Gojobori T."/>
            <person name="Green R.E."/>
            <person name="Gustincich S."/>
            <person name="Harbers M."/>
            <person name="Hayashi Y."/>
            <person name="Hensch T.K."/>
            <person name="Hirokawa N."/>
            <person name="Hill D."/>
            <person name="Huminiecki L."/>
            <person name="Iacono M."/>
            <person name="Ikeo K."/>
            <person name="Iwama A."/>
            <person name="Ishikawa T."/>
            <person name="Jakt M."/>
            <person name="Kanapin A."/>
            <person name="Katoh M."/>
            <person name="Kawasawa Y."/>
            <person name="Kelso J."/>
            <person name="Kitamura H."/>
            <person name="Kitano H."/>
            <person name="Kollias G."/>
            <person name="Krishnan S.P."/>
            <person name="Kruger A."/>
            <person name="Kummerfeld S.K."/>
            <person name="Kurochkin I.V."/>
            <person name="Lareau L.F."/>
            <person name="Lazarevic D."/>
            <person name="Lipovich L."/>
            <person name="Liu J."/>
            <person name="Liuni S."/>
            <person name="McWilliam S."/>
            <person name="Madan Babu M."/>
            <person name="Madera M."/>
            <person name="Marchionni L."/>
            <person name="Matsuda H."/>
            <person name="Matsuzawa S."/>
            <person name="Miki H."/>
            <person name="Mignone F."/>
            <person name="Miyake S."/>
            <person name="Morris K."/>
            <person name="Mottagui-Tabar S."/>
            <person name="Mulder N."/>
            <person name="Nakano N."/>
            <person name="Nakauchi H."/>
            <person name="Ng P."/>
            <person name="Nilsson R."/>
            <person name="Nishiguchi S."/>
            <person name="Nishikawa S."/>
            <person name="Nori F."/>
            <person name="Ohara O."/>
            <person name="Okazaki Y."/>
            <person name="Orlando V."/>
            <person name="Pang K.C."/>
            <person name="Pavan W.J."/>
            <person name="Pavesi G."/>
            <person name="Pesole G."/>
            <person name="Petrovsky N."/>
            <person name="Piazza S."/>
            <person name="Reed J."/>
            <person name="Reid J.F."/>
            <person name="Ring B.Z."/>
            <person name="Ringwald M."/>
            <person name="Rost B."/>
            <person name="Ruan Y."/>
            <person name="Salzberg S.L."/>
            <person name="Sandelin A."/>
            <person name="Schneider C."/>
            <person name="Schoenbach C."/>
            <person name="Sekiguchi K."/>
            <person name="Semple C.A."/>
            <person name="Seno S."/>
            <person name="Sessa L."/>
            <person name="Sheng Y."/>
            <person name="Shibata Y."/>
            <person name="Shimada H."/>
            <person name="Shimada K."/>
            <person name="Silva D."/>
            <person name="Sinclair B."/>
            <person name="Sperling S."/>
            <person name="Stupka E."/>
            <person name="Sugiura K."/>
            <person name="Sultana R."/>
            <person name="Takenaka Y."/>
            <person name="Taki K."/>
            <person name="Tammoja K."/>
            <person name="Tan S.L."/>
            <person name="Tang S."/>
            <person name="Taylor M.S."/>
            <person name="Tegner J."/>
            <person name="Teichmann S.A."/>
            <person name="Ueda H.R."/>
            <person name="van Nimwegen E."/>
            <person name="Verardo R."/>
            <person name="Wei C.L."/>
            <person name="Yagi K."/>
            <person name="Yamanishi H."/>
            <person name="Zabarovsky E."/>
            <person name="Zhu S."/>
            <person name="Zimmer A."/>
            <person name="Hide W."/>
            <person name="Bult C."/>
            <person name="Grimmond S.M."/>
            <person name="Teasdale R.D."/>
            <person name="Liu E.T."/>
            <person name="Brusic V."/>
            <person name="Quackenbush J."/>
            <person name="Wahlestedt C."/>
            <person name="Mattick J.S."/>
            <person name="Hume D.A."/>
            <person name="Kai C."/>
            <person name="Sasaki D."/>
            <person name="Tomaru Y."/>
            <person name="Fukuda S."/>
            <person name="Kanamori-Katayama M."/>
            <person name="Suzuki M."/>
            <person name="Aoki J."/>
            <person name="Arakawa T."/>
            <person name="Iida J."/>
            <person name="Imamura K."/>
            <person name="Itoh M."/>
            <person name="Kato T."/>
            <person name="Kawaji H."/>
            <person name="Kawagashira N."/>
            <person name="Kawashima T."/>
            <person name="Kojima M."/>
            <person name="Kondo S."/>
            <person name="Konno H."/>
            <person name="Nakano K."/>
            <person name="Ninomiya N."/>
            <person name="Nishio T."/>
            <person name="Okada M."/>
            <person name="Plessy C."/>
            <person name="Shibata K."/>
            <person name="Shiraki T."/>
            <person name="Suzuki S."/>
            <person name="Tagami M."/>
            <person name="Waki K."/>
            <person name="Watahiki A."/>
            <person name="Okamura-Oho Y."/>
            <person name="Suzuki H."/>
            <person name="Kawai J."/>
            <person name="Hayashizaki Y."/>
        </authorList>
    </citation>
    <scope>NUCLEOTIDE SEQUENCE [LARGE SCALE MRNA]</scope>
    <source>
        <strain>C57BL/6J</strain>
        <tissue>Testis</tissue>
    </source>
</reference>
<reference key="2">
    <citation type="journal article" date="2009" name="PLoS Biol.">
        <title>Lineage-specific biology revealed by a finished genome assembly of the mouse.</title>
        <authorList>
            <person name="Church D.M."/>
            <person name="Goodstadt L."/>
            <person name="Hillier L.W."/>
            <person name="Zody M.C."/>
            <person name="Goldstein S."/>
            <person name="She X."/>
            <person name="Bult C.J."/>
            <person name="Agarwala R."/>
            <person name="Cherry J.L."/>
            <person name="DiCuccio M."/>
            <person name="Hlavina W."/>
            <person name="Kapustin Y."/>
            <person name="Meric P."/>
            <person name="Maglott D."/>
            <person name="Birtle Z."/>
            <person name="Marques A.C."/>
            <person name="Graves T."/>
            <person name="Zhou S."/>
            <person name="Teague B."/>
            <person name="Potamousis K."/>
            <person name="Churas C."/>
            <person name="Place M."/>
            <person name="Herschleb J."/>
            <person name="Runnheim R."/>
            <person name="Forrest D."/>
            <person name="Amos-Landgraf J."/>
            <person name="Schwartz D.C."/>
            <person name="Cheng Z."/>
            <person name="Lindblad-Toh K."/>
            <person name="Eichler E.E."/>
            <person name="Ponting C.P."/>
        </authorList>
    </citation>
    <scope>NUCLEOTIDE SEQUENCE [LARGE SCALE GENOMIC DNA]</scope>
    <source>
        <strain>C57BL/6J</strain>
    </source>
</reference>
<dbReference type="EMBL" id="AK132828">
    <property type="protein sequence ID" value="BAE21382.1"/>
    <property type="molecule type" value="mRNA"/>
</dbReference>
<dbReference type="EMBL" id="AL808110">
    <property type="status" value="NOT_ANNOTATED_CDS"/>
    <property type="molecule type" value="Genomic_DNA"/>
</dbReference>
<dbReference type="CCDS" id="CCDS53113.1"/>
<dbReference type="RefSeq" id="NP_001028958.1">
    <property type="nucleotide sequence ID" value="NM_001033786.2"/>
</dbReference>
<dbReference type="STRING" id="10090.ENSMUSP00000098976"/>
<dbReference type="PhosphoSitePlus" id="Q3V0X1"/>
<dbReference type="PaxDb" id="10090-ENSMUSP00000098976"/>
<dbReference type="ProteomicsDB" id="261439"/>
<dbReference type="Antibodypedia" id="71256">
    <property type="antibodies" value="5 antibodies from 5 providers"/>
</dbReference>
<dbReference type="Ensembl" id="ENSMUST00000101433.9">
    <property type="protein sequence ID" value="ENSMUSP00000098976.3"/>
    <property type="gene ID" value="ENSMUSG00000073094.10"/>
</dbReference>
<dbReference type="Ensembl" id="ENSMUST00000165080.2">
    <property type="protein sequence ID" value="ENSMUSP00000132737.2"/>
    <property type="gene ID" value="ENSMUSG00000073094.10"/>
</dbReference>
<dbReference type="GeneID" id="434800"/>
<dbReference type="KEGG" id="mmu:434800"/>
<dbReference type="UCSC" id="uc009tps.1">
    <property type="organism name" value="mouse"/>
</dbReference>
<dbReference type="AGR" id="MGI:3588243"/>
<dbReference type="CTD" id="100132963"/>
<dbReference type="MGI" id="MGI:3588243">
    <property type="gene designation" value="Smim9"/>
</dbReference>
<dbReference type="VEuPathDB" id="HostDB:ENSMUSG00000073094"/>
<dbReference type="eggNOG" id="ENOG502TKME">
    <property type="taxonomic scope" value="Eukaryota"/>
</dbReference>
<dbReference type="GeneTree" id="ENSGT00390000005685"/>
<dbReference type="HOGENOM" id="CLU_1864476_0_0_1"/>
<dbReference type="InParanoid" id="Q3V0X1"/>
<dbReference type="OMA" id="HRSWLNN"/>
<dbReference type="OrthoDB" id="9537610at2759"/>
<dbReference type="PhylomeDB" id="Q3V0X1"/>
<dbReference type="TreeFam" id="TF354094"/>
<dbReference type="BioGRID-ORCS" id="434800">
    <property type="hits" value="3 hits in 77 CRISPR screens"/>
</dbReference>
<dbReference type="ChiTaRS" id="Smim9">
    <property type="organism name" value="mouse"/>
</dbReference>
<dbReference type="PRO" id="PR:Q3V0X1"/>
<dbReference type="Proteomes" id="UP000000589">
    <property type="component" value="Chromosome X"/>
</dbReference>
<dbReference type="RNAct" id="Q3V0X1">
    <property type="molecule type" value="protein"/>
</dbReference>
<dbReference type="Bgee" id="ENSMUSG00000073094">
    <property type="expression patterns" value="Expressed in spermatid and 29 other cell types or tissues"/>
</dbReference>
<dbReference type="GO" id="GO:0005886">
    <property type="term" value="C:plasma membrane"/>
    <property type="evidence" value="ECO:0007669"/>
    <property type="project" value="UniProtKB-SubCell"/>
</dbReference>
<dbReference type="InterPro" id="IPR038853">
    <property type="entry name" value="Smim9"/>
</dbReference>
<dbReference type="PANTHER" id="PTHR41687">
    <property type="entry name" value="SMALL INTEGRAL MEMBRANE PROTEIN 9"/>
    <property type="match status" value="1"/>
</dbReference>
<dbReference type="PANTHER" id="PTHR41687:SF1">
    <property type="entry name" value="SMALL INTEGRAL MEMBRANE PROTEIN 9"/>
    <property type="match status" value="1"/>
</dbReference>
<comment type="subcellular location">
    <subcellularLocation>
        <location evidence="2">Cell membrane</location>
        <topology evidence="2">Single-pass type I membrane protein</topology>
    </subcellularLocation>
</comment>
<keyword id="KW-1003">Cell membrane</keyword>
<keyword id="KW-0472">Membrane</keyword>
<keyword id="KW-1185">Reference proteome</keyword>
<keyword id="KW-0732">Signal</keyword>
<keyword id="KW-0812">Transmembrane</keyword>
<keyword id="KW-1133">Transmembrane helix</keyword>
<proteinExistence type="evidence at transcript level"/>
<evidence type="ECO:0000255" key="1"/>
<evidence type="ECO:0000305" key="2"/>
<accession>Q3V0X1</accession>